<name>PDXT_THEMA</name>
<gene>
    <name evidence="1" type="primary">pdxT</name>
    <name evidence="3" type="synonym">yaaE</name>
    <name type="ordered locus">TM_0472</name>
</gene>
<organism>
    <name type="scientific">Thermotoga maritima (strain ATCC 43589 / DSM 3109 / JCM 10099 / NBRC 100826 / MSB8)</name>
    <dbReference type="NCBI Taxonomy" id="243274"/>
    <lineage>
        <taxon>Bacteria</taxon>
        <taxon>Thermotogati</taxon>
        <taxon>Thermotogota</taxon>
        <taxon>Thermotogae</taxon>
        <taxon>Thermotogales</taxon>
        <taxon>Thermotogaceae</taxon>
        <taxon>Thermotoga</taxon>
    </lineage>
</organism>
<reference key="1">
    <citation type="journal article" date="1999" name="Nature">
        <title>Evidence for lateral gene transfer between Archaea and Bacteria from genome sequence of Thermotoga maritima.</title>
        <authorList>
            <person name="Nelson K.E."/>
            <person name="Clayton R.A."/>
            <person name="Gill S.R."/>
            <person name="Gwinn M.L."/>
            <person name="Dodson R.J."/>
            <person name="Haft D.H."/>
            <person name="Hickey E.K."/>
            <person name="Peterson J.D."/>
            <person name="Nelson W.C."/>
            <person name="Ketchum K.A."/>
            <person name="McDonald L.A."/>
            <person name="Utterback T.R."/>
            <person name="Malek J.A."/>
            <person name="Linher K.D."/>
            <person name="Garrett M.M."/>
            <person name="Stewart A.M."/>
            <person name="Cotton M.D."/>
            <person name="Pratt M.S."/>
            <person name="Phillips C.A."/>
            <person name="Richardson D.L."/>
            <person name="Heidelberg J.F."/>
            <person name="Sutton G.G."/>
            <person name="Fleischmann R.D."/>
            <person name="Eisen J.A."/>
            <person name="White O."/>
            <person name="Salzberg S.L."/>
            <person name="Smith H.O."/>
            <person name="Venter J.C."/>
            <person name="Fraser C.M."/>
        </authorList>
    </citation>
    <scope>NUCLEOTIDE SEQUENCE [LARGE SCALE GENOMIC DNA]</scope>
    <source>
        <strain>ATCC 43589 / DSM 3109 / JCM 10099 / NBRC 100826 / MSB8</strain>
    </source>
</reference>
<reference key="2">
    <citation type="journal article" date="2006" name="Biochemistry">
        <title>Structural insights into the mechanism of the PLP synthase holoenzyme from Thermotoga maritima.</title>
        <authorList>
            <person name="Zein F."/>
            <person name="Zhang Y."/>
            <person name="Kang Y.N."/>
            <person name="Burns K."/>
            <person name="Begley T.P."/>
            <person name="Ealick S.E."/>
        </authorList>
    </citation>
    <scope>X-RAY CRYSTALLOGRAPHY (2.90 ANGSTROMS) IN COMPLEX WITH SUBUNIT PDXS</scope>
    <scope>SUBUNIT</scope>
    <scope>REACTION MECHANISM</scope>
</reference>
<sequence>MKIGVLGVQGDVREHVEALHKLGVETLIVKLPEQLDMVDGLILPGGESTTMIRILKEMDMDEKLVERINNGLPVFATCAGVILLAKRIKNYSQEKLGVLDITVERNAYGRQVESFETFVEIPAVGKDPFRAIFIRAPRIVETGKNVEILATYDYDPVLVKEGNILACTFHPELTDDLRLHRYFLEMVK</sequence>
<comment type="function">
    <text evidence="1">Catalyzes the hydrolysis of glutamine to glutamate and ammonia as part of the biosynthesis of pyridoxal 5'-phosphate. The resulting ammonia molecule is channeled to the active site of PdxS.</text>
</comment>
<comment type="catalytic activity">
    <reaction evidence="1">
        <text>aldehydo-D-ribose 5-phosphate + D-glyceraldehyde 3-phosphate + L-glutamine = pyridoxal 5'-phosphate + L-glutamate + phosphate + 3 H2O + H(+)</text>
        <dbReference type="Rhea" id="RHEA:31507"/>
        <dbReference type="ChEBI" id="CHEBI:15377"/>
        <dbReference type="ChEBI" id="CHEBI:15378"/>
        <dbReference type="ChEBI" id="CHEBI:29985"/>
        <dbReference type="ChEBI" id="CHEBI:43474"/>
        <dbReference type="ChEBI" id="CHEBI:58273"/>
        <dbReference type="ChEBI" id="CHEBI:58359"/>
        <dbReference type="ChEBI" id="CHEBI:59776"/>
        <dbReference type="ChEBI" id="CHEBI:597326"/>
        <dbReference type="EC" id="4.3.3.6"/>
    </reaction>
</comment>
<comment type="catalytic activity">
    <reaction evidence="1">
        <text>L-glutamine + H2O = L-glutamate + NH4(+)</text>
        <dbReference type="Rhea" id="RHEA:15889"/>
        <dbReference type="ChEBI" id="CHEBI:15377"/>
        <dbReference type="ChEBI" id="CHEBI:28938"/>
        <dbReference type="ChEBI" id="CHEBI:29985"/>
        <dbReference type="ChEBI" id="CHEBI:58359"/>
        <dbReference type="EC" id="3.5.1.2"/>
    </reaction>
</comment>
<comment type="pathway">
    <text evidence="1">Cofactor biosynthesis; pyridoxal 5'-phosphate biosynthesis.</text>
</comment>
<comment type="subunit">
    <text evidence="1 2">In the presence of PdxS, forms a dodecamer of heterodimers. Only shows activity in the heterodimer.</text>
</comment>
<comment type="similarity">
    <text evidence="1">Belongs to the glutaminase PdxT/SNO family.</text>
</comment>
<dbReference type="EC" id="4.3.3.6" evidence="1"/>
<dbReference type="EC" id="3.5.1.2" evidence="1"/>
<dbReference type="EMBL" id="AE000512">
    <property type="protein sequence ID" value="AAD35557.1"/>
    <property type="molecule type" value="Genomic_DNA"/>
</dbReference>
<dbReference type="PIR" id="H72371">
    <property type="entry name" value="H72371"/>
</dbReference>
<dbReference type="RefSeq" id="NP_228282.1">
    <property type="nucleotide sequence ID" value="NC_000853.1"/>
</dbReference>
<dbReference type="RefSeq" id="WP_004081494.1">
    <property type="nucleotide sequence ID" value="NZ_CP011107.1"/>
</dbReference>
<dbReference type="PDB" id="2ISS">
    <property type="method" value="X-ray"/>
    <property type="resolution" value="2.90 A"/>
    <property type="chains" value="D/E/F=1-188"/>
</dbReference>
<dbReference type="PDBsum" id="2ISS"/>
<dbReference type="SMR" id="Q9WYU3"/>
<dbReference type="FunCoup" id="Q9WYU3">
    <property type="interactions" value="168"/>
</dbReference>
<dbReference type="STRING" id="243274.TM_0472"/>
<dbReference type="PaxDb" id="243274-THEMA_02330"/>
<dbReference type="EnsemblBacteria" id="AAD35557">
    <property type="protein sequence ID" value="AAD35557"/>
    <property type="gene ID" value="TM_0472"/>
</dbReference>
<dbReference type="KEGG" id="tma:TM0472"/>
<dbReference type="KEGG" id="tmi:THEMA_02330"/>
<dbReference type="KEGG" id="tmm:Tmari_0469"/>
<dbReference type="KEGG" id="tmw:THMA_0481"/>
<dbReference type="eggNOG" id="COG0311">
    <property type="taxonomic scope" value="Bacteria"/>
</dbReference>
<dbReference type="InParanoid" id="Q9WYU3"/>
<dbReference type="OrthoDB" id="9810320at2"/>
<dbReference type="UniPathway" id="UPA00245"/>
<dbReference type="EvolutionaryTrace" id="Q9WYU3"/>
<dbReference type="Proteomes" id="UP000008183">
    <property type="component" value="Chromosome"/>
</dbReference>
<dbReference type="GO" id="GO:0005829">
    <property type="term" value="C:cytosol"/>
    <property type="evidence" value="ECO:0000318"/>
    <property type="project" value="GO_Central"/>
</dbReference>
<dbReference type="GO" id="GO:1903600">
    <property type="term" value="C:glutaminase complex"/>
    <property type="evidence" value="ECO:0000318"/>
    <property type="project" value="GO_Central"/>
</dbReference>
<dbReference type="GO" id="GO:0004359">
    <property type="term" value="F:glutaminase activity"/>
    <property type="evidence" value="ECO:0007669"/>
    <property type="project" value="UniProtKB-UniRule"/>
</dbReference>
<dbReference type="GO" id="GO:0036381">
    <property type="term" value="F:pyridoxal 5'-phosphate synthase (glutamine hydrolysing) activity"/>
    <property type="evidence" value="ECO:0007669"/>
    <property type="project" value="UniProtKB-UniRule"/>
</dbReference>
<dbReference type="GO" id="GO:0006543">
    <property type="term" value="P:glutamine catabolic process"/>
    <property type="evidence" value="ECO:0007669"/>
    <property type="project" value="UniProtKB-UniRule"/>
</dbReference>
<dbReference type="GO" id="GO:0042823">
    <property type="term" value="P:pyridoxal phosphate biosynthetic process"/>
    <property type="evidence" value="ECO:0000318"/>
    <property type="project" value="GO_Central"/>
</dbReference>
<dbReference type="GO" id="GO:0008614">
    <property type="term" value="P:pyridoxine metabolic process"/>
    <property type="evidence" value="ECO:0000318"/>
    <property type="project" value="GO_Central"/>
</dbReference>
<dbReference type="CDD" id="cd01749">
    <property type="entry name" value="GATase1_PB"/>
    <property type="match status" value="1"/>
</dbReference>
<dbReference type="FunFam" id="3.40.50.880:FF:000041">
    <property type="entry name" value="Glutamine amidotransferase subunit pdxT, putative"/>
    <property type="match status" value="1"/>
</dbReference>
<dbReference type="Gene3D" id="3.40.50.880">
    <property type="match status" value="1"/>
</dbReference>
<dbReference type="HAMAP" id="MF_01615">
    <property type="entry name" value="PdxT"/>
    <property type="match status" value="1"/>
</dbReference>
<dbReference type="InterPro" id="IPR029062">
    <property type="entry name" value="Class_I_gatase-like"/>
</dbReference>
<dbReference type="InterPro" id="IPR002161">
    <property type="entry name" value="PdxT/SNO"/>
</dbReference>
<dbReference type="InterPro" id="IPR021196">
    <property type="entry name" value="PdxT/SNO_CS"/>
</dbReference>
<dbReference type="NCBIfam" id="TIGR03800">
    <property type="entry name" value="PLP_synth_Pdx2"/>
    <property type="match status" value="1"/>
</dbReference>
<dbReference type="PANTHER" id="PTHR31559">
    <property type="entry name" value="PYRIDOXAL 5'-PHOSPHATE SYNTHASE SUBUNIT SNO"/>
    <property type="match status" value="1"/>
</dbReference>
<dbReference type="PANTHER" id="PTHR31559:SF0">
    <property type="entry name" value="PYRIDOXAL 5'-PHOSPHATE SYNTHASE SUBUNIT SNO1-RELATED"/>
    <property type="match status" value="1"/>
</dbReference>
<dbReference type="Pfam" id="PF01174">
    <property type="entry name" value="SNO"/>
    <property type="match status" value="1"/>
</dbReference>
<dbReference type="PIRSF" id="PIRSF005639">
    <property type="entry name" value="Glut_amidoT_SNO"/>
    <property type="match status" value="1"/>
</dbReference>
<dbReference type="SUPFAM" id="SSF52317">
    <property type="entry name" value="Class I glutamine amidotransferase-like"/>
    <property type="match status" value="1"/>
</dbReference>
<dbReference type="PROSITE" id="PS01236">
    <property type="entry name" value="PDXT_SNO_1"/>
    <property type="match status" value="1"/>
</dbReference>
<dbReference type="PROSITE" id="PS51130">
    <property type="entry name" value="PDXT_SNO_2"/>
    <property type="match status" value="1"/>
</dbReference>
<accession>Q9WYU3</accession>
<proteinExistence type="evidence at protein level"/>
<evidence type="ECO:0000255" key="1">
    <source>
        <dbReference type="HAMAP-Rule" id="MF_01615"/>
    </source>
</evidence>
<evidence type="ECO:0000269" key="2">
    <source>
    </source>
</evidence>
<evidence type="ECO:0000303" key="3">
    <source>
    </source>
</evidence>
<evidence type="ECO:0007829" key="4">
    <source>
        <dbReference type="PDB" id="2ISS"/>
    </source>
</evidence>
<feature type="chain" id="PRO_0000135669" description="Pyridoxal 5'-phosphate synthase subunit PdxT">
    <location>
        <begin position="1"/>
        <end position="188"/>
    </location>
</feature>
<feature type="active site" description="Nucleophile" evidence="1">
    <location>
        <position position="78"/>
    </location>
</feature>
<feature type="active site" description="Charge relay system" evidence="1">
    <location>
        <position position="170"/>
    </location>
</feature>
<feature type="active site" description="Charge relay system" evidence="1">
    <location>
        <position position="172"/>
    </location>
</feature>
<feature type="binding site" evidence="1">
    <location>
        <begin position="46"/>
        <end position="48"/>
    </location>
    <ligand>
        <name>L-glutamine</name>
        <dbReference type="ChEBI" id="CHEBI:58359"/>
    </ligand>
</feature>
<feature type="binding site" evidence="1">
    <location>
        <position position="105"/>
    </location>
    <ligand>
        <name>L-glutamine</name>
        <dbReference type="ChEBI" id="CHEBI:58359"/>
    </ligand>
</feature>
<feature type="binding site" evidence="1">
    <location>
        <begin position="134"/>
        <end position="135"/>
    </location>
    <ligand>
        <name>L-glutamine</name>
        <dbReference type="ChEBI" id="CHEBI:58359"/>
    </ligand>
</feature>
<feature type="strand" evidence="4">
    <location>
        <begin position="2"/>
        <end position="6"/>
    </location>
</feature>
<feature type="strand" evidence="4">
    <location>
        <begin position="8"/>
        <end position="10"/>
    </location>
</feature>
<feature type="helix" evidence="4">
    <location>
        <begin position="12"/>
        <end position="21"/>
    </location>
</feature>
<feature type="strand" evidence="4">
    <location>
        <begin position="25"/>
        <end position="29"/>
    </location>
</feature>
<feature type="helix" evidence="4">
    <location>
        <begin position="32"/>
        <end position="37"/>
    </location>
</feature>
<feature type="strand" evidence="4">
    <location>
        <begin position="39"/>
        <end position="43"/>
    </location>
</feature>
<feature type="helix" evidence="4">
    <location>
        <begin position="48"/>
        <end position="57"/>
    </location>
</feature>
<feature type="helix" evidence="4">
    <location>
        <begin position="61"/>
        <end position="69"/>
    </location>
</feature>
<feature type="strand" evidence="4">
    <location>
        <begin position="74"/>
        <end position="77"/>
    </location>
</feature>
<feature type="helix" evidence="4">
    <location>
        <begin position="79"/>
        <end position="84"/>
    </location>
</feature>
<feature type="strand" evidence="4">
    <location>
        <begin position="85"/>
        <end position="88"/>
    </location>
</feature>
<feature type="strand" evidence="4">
    <location>
        <begin position="99"/>
        <end position="104"/>
    </location>
</feature>
<feature type="turn" evidence="4">
    <location>
        <begin position="105"/>
        <end position="108"/>
    </location>
</feature>
<feature type="helix" evidence="4">
    <location>
        <begin position="111"/>
        <end position="113"/>
    </location>
</feature>
<feature type="strand" evidence="4">
    <location>
        <begin position="115"/>
        <end position="119"/>
    </location>
</feature>
<feature type="helix" evidence="4">
    <location>
        <begin position="122"/>
        <end position="124"/>
    </location>
</feature>
<feature type="strand" evidence="4">
    <location>
        <begin position="129"/>
        <end position="135"/>
    </location>
</feature>
<feature type="strand" evidence="4">
    <location>
        <begin position="138"/>
        <end position="142"/>
    </location>
</feature>
<feature type="strand" evidence="4">
    <location>
        <begin position="147"/>
        <end position="152"/>
    </location>
</feature>
<feature type="strand" evidence="4">
    <location>
        <begin position="155"/>
        <end position="161"/>
    </location>
</feature>
<feature type="strand" evidence="4">
    <location>
        <begin position="164"/>
        <end position="169"/>
    </location>
</feature>
<feature type="helix" evidence="4">
    <location>
        <begin position="171"/>
        <end position="173"/>
    </location>
</feature>
<feature type="helix" evidence="4">
    <location>
        <begin position="178"/>
        <end position="184"/>
    </location>
</feature>
<keyword id="KW-0002">3D-structure</keyword>
<keyword id="KW-0315">Glutamine amidotransferase</keyword>
<keyword id="KW-0378">Hydrolase</keyword>
<keyword id="KW-0456">Lyase</keyword>
<keyword id="KW-0663">Pyridoxal phosphate</keyword>
<keyword id="KW-1185">Reference proteome</keyword>
<protein>
    <recommendedName>
        <fullName evidence="1">Pyridoxal 5'-phosphate synthase subunit PdxT</fullName>
        <ecNumber evidence="1">4.3.3.6</ecNumber>
    </recommendedName>
    <alternativeName>
        <fullName evidence="1">Pdx2</fullName>
    </alternativeName>
    <alternativeName>
        <fullName evidence="1">Pyridoxal 5'-phosphate synthase glutaminase subunit</fullName>
        <ecNumber evidence="1">3.5.1.2</ecNumber>
    </alternativeName>
</protein>